<gene>
    <name type="primary">NUT1</name>
    <name type="synonym">MED5</name>
    <name type="ORF">SNOG_05221</name>
    <name type="ORF">SNOG_05222</name>
    <name type="ORF">SNOG_05223</name>
</gene>
<evidence type="ECO:0000250" key="1"/>
<evidence type="ECO:0000305" key="2"/>
<sequence length="984" mass="107931">MCVPAKQGTLHAKSPLPGLKIAGLLLRPRAANASSVDPRVIIYLERLLALKKVDASDVLSSAFQYSKDRLPKTGDDGSSKDSGWHNPPELEEVVFHRLSKAFQAEERPVNSTEGLRTLVVVTRWMQTMVTSHTSDTMIQAMAGIQQQPQQQSINVREGLGMLVVGVIENQKMLNILNKHHIKNCKSPGRSRKSNTTFTTNLATGEWRSERRSRTETQDLKSLRSNFEAVDWIFPTINTRAGLYIFLNSLIDSQNMATDLITAAFDILANAMYRSEPSQNMFCLKSFLINKIPILLLQISSSMFPMTAELSITQALSHVDPNAFPAFSQGFDDMLGNTNSLADVRQDFLNACALHGLITTATVERLLGETPMQGPPGTKYDKSTLLEQCKSNFDKISMYIDELDNLDGNAGAIVGAIAEFIPHLCETQMTMYLKQLSSLLFKKPQAIDVILQFTSPASILRPLCQILDDWHYDSDQGEYQPVYDEFGAVLVLVMTFMYRYDLTYHDIGIGAESFVARLMTKGNQSMLPDEMTDEQSKHLGHWLKGLYDAGNEGLSNDVFASCSPREFYFIVPTLFKQTVMALSAGILTFESVKGGLEYLMETFLLPSLIGGLIWMSSYALIQSHSDLDAIMRIFREVISSAPSSGDAQAMHSTILSIVSSRLEKCLRTIQRRDASRANSIEPLIQAIKGNLHSERSMFASMKELEQWTNAPNSTLHTSLRHTVQQLSQWASTSSIQPNPPSYTHRQVYVSLKIMGASKVIKAIVDELKAQTEASNGAAALDVGVSIICAPTVDDSPVPVAWLSSPIPASNPPRTRLNLREMLKHEFDNAAALVATDPLAAETVVRLHRRVEAQLSSIAENALQGHGSVLNLPNVNMGDMQSQSIPDDITKAIDDAAAASIADDITTMDNKALQRSMDDLTGPDGLDLSSIGMGTGDAGTGDMGAELGNLPDLDLGDMSGMGMDMDMDMAMGGGGDDDWGLDFDNM</sequence>
<feature type="chain" id="PRO_0000302783" description="Mediator of RNA polymerase II transcription subunit 5">
    <location>
        <begin position="1"/>
        <end position="984"/>
    </location>
</feature>
<comment type="function">
    <text evidence="1">Component of the Mediator complex, a coactivator involved in the regulated transcription of nearly all RNA polymerase II-dependent genes. Mediator functions as a bridge to convey information from gene-specific regulatory proteins to the basal RNA polymerase II transcription machinery. Mediator is recruited to promoters by direct interactions with regulatory proteins and serves as a scaffold for the assembly of a functional preinitiation complex with RNA polymerase II and the general transcription factors (By similarity).</text>
</comment>
<comment type="subunit">
    <text evidence="1">Component of the Mediator complex.</text>
</comment>
<comment type="subcellular location">
    <subcellularLocation>
        <location evidence="1">Nucleus</location>
    </subcellularLocation>
</comment>
<comment type="similarity">
    <text evidence="2">Belongs to the Mediator complex subunit 5 family.</text>
</comment>
<comment type="sequence caution" evidence="2">
    <conflict type="erroneous gene model prediction">
        <sequence resource="EMBL-CDS" id="EAT87614"/>
    </conflict>
</comment>
<protein>
    <recommendedName>
        <fullName>Mediator of RNA polymerase II transcription subunit 5</fullName>
    </recommendedName>
    <alternativeName>
        <fullName>Mediator complex subunit 5</fullName>
    </alternativeName>
</protein>
<reference key="1">
    <citation type="journal article" date="2007" name="Plant Cell">
        <title>Dothideomycete-plant interactions illuminated by genome sequencing and EST analysis of the wheat pathogen Stagonospora nodorum.</title>
        <authorList>
            <person name="Hane J.K."/>
            <person name="Lowe R.G.T."/>
            <person name="Solomon P.S."/>
            <person name="Tan K.-C."/>
            <person name="Schoch C.L."/>
            <person name="Spatafora J.W."/>
            <person name="Crous P.W."/>
            <person name="Kodira C.D."/>
            <person name="Birren B.W."/>
            <person name="Galagan J.E."/>
            <person name="Torriani S.F.F."/>
            <person name="McDonald B.A."/>
            <person name="Oliver R.P."/>
        </authorList>
    </citation>
    <scope>NUCLEOTIDE SEQUENCE [LARGE SCALE GENOMIC DNA]</scope>
    <source>
        <strain>SN15 / ATCC MYA-4574 / FGSC 10173</strain>
    </source>
</reference>
<keyword id="KW-0010">Activator</keyword>
<keyword id="KW-0539">Nucleus</keyword>
<keyword id="KW-0804">Transcription</keyword>
<keyword id="KW-0805">Transcription regulation</keyword>
<accession>Q0USP2</accession>
<accession>Q0USP1</accession>
<name>MED5_PHANO</name>
<organism>
    <name type="scientific">Phaeosphaeria nodorum (strain SN15 / ATCC MYA-4574 / FGSC 10173)</name>
    <name type="common">Glume blotch fungus</name>
    <name type="synonym">Parastagonospora nodorum</name>
    <dbReference type="NCBI Taxonomy" id="321614"/>
    <lineage>
        <taxon>Eukaryota</taxon>
        <taxon>Fungi</taxon>
        <taxon>Dikarya</taxon>
        <taxon>Ascomycota</taxon>
        <taxon>Pezizomycotina</taxon>
        <taxon>Dothideomycetes</taxon>
        <taxon>Pleosporomycetidae</taxon>
        <taxon>Pleosporales</taxon>
        <taxon>Pleosporineae</taxon>
        <taxon>Phaeosphaeriaceae</taxon>
        <taxon>Parastagonospora</taxon>
    </lineage>
</organism>
<dbReference type="EMBL" id="CH445331">
    <property type="protein sequence ID" value="EAT87614.2"/>
    <property type="status" value="ALT_SEQ"/>
    <property type="molecule type" value="Genomic_DNA"/>
</dbReference>
<dbReference type="RefSeq" id="XP_001795631.1">
    <property type="nucleotide sequence ID" value="XM_001795579.1"/>
</dbReference>
<dbReference type="STRING" id="321614.Q0USP2"/>
<dbReference type="GeneID" id="5972506"/>
<dbReference type="KEGG" id="pno:SNOG_05223"/>
<dbReference type="VEuPathDB" id="FungiDB:JI435_052230"/>
<dbReference type="eggNOG" id="KOG0725">
    <property type="taxonomic scope" value="Eukaryota"/>
</dbReference>
<dbReference type="InParanoid" id="Q0USP2"/>
<dbReference type="Proteomes" id="UP000001055">
    <property type="component" value="Unassembled WGS sequence"/>
</dbReference>
<dbReference type="GO" id="GO:0016592">
    <property type="term" value="C:mediator complex"/>
    <property type="evidence" value="ECO:0000318"/>
    <property type="project" value="GO_Central"/>
</dbReference>
<dbReference type="GO" id="GO:0003712">
    <property type="term" value="F:transcription coregulator activity"/>
    <property type="evidence" value="ECO:0007669"/>
    <property type="project" value="InterPro"/>
</dbReference>
<dbReference type="GO" id="GO:0006357">
    <property type="term" value="P:regulation of transcription by RNA polymerase II"/>
    <property type="evidence" value="ECO:0000318"/>
    <property type="project" value="GO_Central"/>
</dbReference>
<dbReference type="InterPro" id="IPR014801">
    <property type="entry name" value="Mediator_Med5_fun"/>
</dbReference>
<dbReference type="PANTHER" id="PTHR35784">
    <property type="entry name" value="MEDIATOR OF RNA POLYMERASE II TRANSCRIPTION SUBUNIT 5"/>
    <property type="match status" value="1"/>
</dbReference>
<dbReference type="PANTHER" id="PTHR35784:SF1">
    <property type="entry name" value="MEDIATOR OF RNA POLYMERASE II TRANSCRIPTION SUBUNIT 5"/>
    <property type="match status" value="1"/>
</dbReference>
<dbReference type="Pfam" id="PF08689">
    <property type="entry name" value="Med5"/>
    <property type="match status" value="2"/>
</dbReference>
<proteinExistence type="inferred from homology"/>